<protein>
    <recommendedName>
        <fullName evidence="6">Proton pump-interactor BIP131</fullName>
    </recommendedName>
    <alternativeName>
        <fullName evidence="5">BRI1-interacting protein 131</fullName>
    </alternativeName>
</protein>
<reference key="1">
    <citation type="journal article" date="2004" name="Plant Biotechnol.">
        <title>Two proton pump interactors identified from a direct phosphorylation screening of a rice cDNA library by using a recombinant BRI1 receptor kinase.</title>
        <authorList>
            <person name="Hirabayashi S."/>
            <person name="Matsushita Y."/>
            <person name="Sato M."/>
            <person name="Ohi R."/>
            <person name="Kasahara M."/>
            <person name="Abe H."/>
            <person name="Nyunoya H."/>
        </authorList>
    </citation>
    <scope>NUCLEOTIDE SEQUENCE [MRNA]</scope>
    <scope>INTERACTION WITH BRI1</scope>
    <scope>INDUCTION BY BRASSINOLIDE</scope>
</reference>
<reference key="2">
    <citation type="journal article" date="2005" name="Nature">
        <title>The map-based sequence of the rice genome.</title>
        <authorList>
            <consortium name="International rice genome sequencing project (IRGSP)"/>
        </authorList>
    </citation>
    <scope>NUCLEOTIDE SEQUENCE [LARGE SCALE GENOMIC DNA]</scope>
    <source>
        <strain>cv. Nipponbare</strain>
    </source>
</reference>
<reference key="3">
    <citation type="journal article" date="2008" name="Nucleic Acids Res.">
        <title>The rice annotation project database (RAP-DB): 2008 update.</title>
        <authorList>
            <consortium name="The rice annotation project (RAP)"/>
        </authorList>
    </citation>
    <scope>GENOME REANNOTATION</scope>
    <source>
        <strain>cv. Nipponbare</strain>
    </source>
</reference>
<reference key="4">
    <citation type="journal article" date="2013" name="Rice">
        <title>Improvement of the Oryza sativa Nipponbare reference genome using next generation sequence and optical map data.</title>
        <authorList>
            <person name="Kawahara Y."/>
            <person name="de la Bastide M."/>
            <person name="Hamilton J.P."/>
            <person name="Kanamori H."/>
            <person name="McCombie W.R."/>
            <person name="Ouyang S."/>
            <person name="Schwartz D.C."/>
            <person name="Tanaka T."/>
            <person name="Wu J."/>
            <person name="Zhou S."/>
            <person name="Childs K.L."/>
            <person name="Davidson R.M."/>
            <person name="Lin H."/>
            <person name="Quesada-Ocampo L."/>
            <person name="Vaillancourt B."/>
            <person name="Sakai H."/>
            <person name="Lee S.S."/>
            <person name="Kim J."/>
            <person name="Numa H."/>
            <person name="Itoh T."/>
            <person name="Buell C.R."/>
            <person name="Matsumoto T."/>
        </authorList>
    </citation>
    <scope>GENOME REANNOTATION</scope>
    <source>
        <strain>cv. Nipponbare</strain>
    </source>
</reference>
<reference key="5">
    <citation type="journal article" date="2005" name="PLoS Biol.">
        <title>The genomes of Oryza sativa: a history of duplications.</title>
        <authorList>
            <person name="Yu J."/>
            <person name="Wang J."/>
            <person name="Lin W."/>
            <person name="Li S."/>
            <person name="Li H."/>
            <person name="Zhou J."/>
            <person name="Ni P."/>
            <person name="Dong W."/>
            <person name="Hu S."/>
            <person name="Zeng C."/>
            <person name="Zhang J."/>
            <person name="Zhang Y."/>
            <person name="Li R."/>
            <person name="Xu Z."/>
            <person name="Li S."/>
            <person name="Li X."/>
            <person name="Zheng H."/>
            <person name="Cong L."/>
            <person name="Lin L."/>
            <person name="Yin J."/>
            <person name="Geng J."/>
            <person name="Li G."/>
            <person name="Shi J."/>
            <person name="Liu J."/>
            <person name="Lv H."/>
            <person name="Li J."/>
            <person name="Wang J."/>
            <person name="Deng Y."/>
            <person name="Ran L."/>
            <person name="Shi X."/>
            <person name="Wang X."/>
            <person name="Wu Q."/>
            <person name="Li C."/>
            <person name="Ren X."/>
            <person name="Wang J."/>
            <person name="Wang X."/>
            <person name="Li D."/>
            <person name="Liu D."/>
            <person name="Zhang X."/>
            <person name="Ji Z."/>
            <person name="Zhao W."/>
            <person name="Sun Y."/>
            <person name="Zhang Z."/>
            <person name="Bao J."/>
            <person name="Han Y."/>
            <person name="Dong L."/>
            <person name="Ji J."/>
            <person name="Chen P."/>
            <person name="Wu S."/>
            <person name="Liu J."/>
            <person name="Xiao Y."/>
            <person name="Bu D."/>
            <person name="Tan J."/>
            <person name="Yang L."/>
            <person name="Ye C."/>
            <person name="Zhang J."/>
            <person name="Xu J."/>
            <person name="Zhou Y."/>
            <person name="Yu Y."/>
            <person name="Zhang B."/>
            <person name="Zhuang S."/>
            <person name="Wei H."/>
            <person name="Liu B."/>
            <person name="Lei M."/>
            <person name="Yu H."/>
            <person name="Li Y."/>
            <person name="Xu H."/>
            <person name="Wei S."/>
            <person name="He X."/>
            <person name="Fang L."/>
            <person name="Zhang Z."/>
            <person name="Zhang Y."/>
            <person name="Huang X."/>
            <person name="Su Z."/>
            <person name="Tong W."/>
            <person name="Li J."/>
            <person name="Tong Z."/>
            <person name="Li S."/>
            <person name="Ye J."/>
            <person name="Wang L."/>
            <person name="Fang L."/>
            <person name="Lei T."/>
            <person name="Chen C.-S."/>
            <person name="Chen H.-C."/>
            <person name="Xu Z."/>
            <person name="Li H."/>
            <person name="Huang H."/>
            <person name="Zhang F."/>
            <person name="Xu H."/>
            <person name="Li N."/>
            <person name="Zhao C."/>
            <person name="Li S."/>
            <person name="Dong L."/>
            <person name="Huang Y."/>
            <person name="Li L."/>
            <person name="Xi Y."/>
            <person name="Qi Q."/>
            <person name="Li W."/>
            <person name="Zhang B."/>
            <person name="Hu W."/>
            <person name="Zhang Y."/>
            <person name="Tian X."/>
            <person name="Jiao Y."/>
            <person name="Liang X."/>
            <person name="Jin J."/>
            <person name="Gao L."/>
            <person name="Zheng W."/>
            <person name="Hao B."/>
            <person name="Liu S.-M."/>
            <person name="Wang W."/>
            <person name="Yuan L."/>
            <person name="Cao M."/>
            <person name="McDermott J."/>
            <person name="Samudrala R."/>
            <person name="Wang J."/>
            <person name="Wong G.K.-S."/>
            <person name="Yang H."/>
        </authorList>
    </citation>
    <scope>NUCLEOTIDE SEQUENCE [LARGE SCALE GENOMIC DNA]</scope>
    <source>
        <strain>cv. Nipponbare</strain>
    </source>
</reference>
<reference key="6">
    <citation type="journal article" date="2003" name="Science">
        <title>Collection, mapping, and annotation of over 28,000 cDNA clones from japonica rice.</title>
        <authorList>
            <consortium name="The rice full-length cDNA consortium"/>
        </authorList>
    </citation>
    <scope>NUCLEOTIDE SEQUENCE [LARGE SCALE MRNA]</scope>
    <source>
        <strain>cv. Nipponbare</strain>
    </source>
</reference>
<name>BP131_ORYSJ</name>
<evidence type="ECO:0000250" key="1">
    <source>
        <dbReference type="UniProtKB" id="O23144"/>
    </source>
</evidence>
<evidence type="ECO:0000255" key="2"/>
<evidence type="ECO:0000256" key="3">
    <source>
        <dbReference type="SAM" id="MobiDB-lite"/>
    </source>
</evidence>
<evidence type="ECO:0000269" key="4">
    <source ref="1"/>
</evidence>
<evidence type="ECO:0000303" key="5">
    <source ref="1"/>
</evidence>
<evidence type="ECO:0000305" key="6"/>
<evidence type="ECO:0000312" key="7">
    <source>
        <dbReference type="EMBL" id="BAD05346.1"/>
    </source>
</evidence>
<evidence type="ECO:0000312" key="8">
    <source>
        <dbReference type="EMBL" id="BAF23635.1"/>
    </source>
</evidence>
<evidence type="ECO:0000312" key="9">
    <source>
        <dbReference type="EMBL" id="EAZ42613.1"/>
    </source>
</evidence>
<proteinExistence type="evidence at protein level"/>
<accession>Q6ZBF6</accession>
<gene>
    <name evidence="5" type="primary">BIP131</name>
    <name evidence="8" type="ordered locus">Os08g0390000</name>
    <name evidence="6" type="ordered locus">LOC_Os08g30060</name>
    <name evidence="9" type="ORF">OsJ_27178</name>
    <name evidence="7" type="ORF">P0671F11.9</name>
</gene>
<dbReference type="EMBL" id="AB117988">
    <property type="protein sequence ID" value="BAD11329.1"/>
    <property type="molecule type" value="mRNA"/>
</dbReference>
<dbReference type="EMBL" id="AP004634">
    <property type="protein sequence ID" value="BAD05346.1"/>
    <property type="molecule type" value="Genomic_DNA"/>
</dbReference>
<dbReference type="EMBL" id="AP008214">
    <property type="protein sequence ID" value="BAF23635.1"/>
    <property type="molecule type" value="Genomic_DNA"/>
</dbReference>
<dbReference type="EMBL" id="AP014964">
    <property type="protein sequence ID" value="BAT05281.1"/>
    <property type="molecule type" value="Genomic_DNA"/>
</dbReference>
<dbReference type="EMBL" id="CM000145">
    <property type="protein sequence ID" value="EAZ42613.1"/>
    <property type="molecule type" value="Genomic_DNA"/>
</dbReference>
<dbReference type="EMBL" id="AK067513">
    <property type="protein sequence ID" value="BAG90456.1"/>
    <property type="molecule type" value="mRNA"/>
</dbReference>
<dbReference type="RefSeq" id="XP_015650155.1">
    <property type="nucleotide sequence ID" value="XM_015794669.1"/>
</dbReference>
<dbReference type="RefSeq" id="XP_015650156.1">
    <property type="nucleotide sequence ID" value="XM_015794670.1"/>
</dbReference>
<dbReference type="SMR" id="Q6ZBF6"/>
<dbReference type="FunCoup" id="Q6ZBF6">
    <property type="interactions" value="561"/>
</dbReference>
<dbReference type="iPTMnet" id="Q6ZBF6"/>
<dbReference type="PaxDb" id="39947-Q6ZBF6"/>
<dbReference type="EnsemblPlants" id="Os08t0390000-01">
    <property type="protein sequence ID" value="Os08t0390000-01"/>
    <property type="gene ID" value="Os08g0390000"/>
</dbReference>
<dbReference type="EnsemblPlants" id="Os08t0390000-02">
    <property type="protein sequence ID" value="Os08t0390000-02"/>
    <property type="gene ID" value="Os08g0390000"/>
</dbReference>
<dbReference type="Gramene" id="Os08t0390000-01">
    <property type="protein sequence ID" value="Os08t0390000-01"/>
    <property type="gene ID" value="Os08g0390000"/>
</dbReference>
<dbReference type="Gramene" id="Os08t0390000-02">
    <property type="protein sequence ID" value="Os08t0390000-02"/>
    <property type="gene ID" value="Os08g0390000"/>
</dbReference>
<dbReference type="KEGG" id="dosa:Os08g0390000"/>
<dbReference type="eggNOG" id="ENOG502QQX1">
    <property type="taxonomic scope" value="Eukaryota"/>
</dbReference>
<dbReference type="HOGENOM" id="CLU_018947_0_0_1"/>
<dbReference type="InParanoid" id="Q6ZBF6"/>
<dbReference type="OMA" id="RDKAYEN"/>
<dbReference type="OrthoDB" id="2195113at2759"/>
<dbReference type="Proteomes" id="UP000000763">
    <property type="component" value="Chromosome 8"/>
</dbReference>
<dbReference type="Proteomes" id="UP000007752">
    <property type="component" value="Chromosome 8"/>
</dbReference>
<dbReference type="Proteomes" id="UP000059680">
    <property type="component" value="Chromosome 8"/>
</dbReference>
<dbReference type="GO" id="GO:0005886">
    <property type="term" value="C:plasma membrane"/>
    <property type="evidence" value="ECO:0007669"/>
    <property type="project" value="UniProtKB-SubCell"/>
</dbReference>
<dbReference type="InterPro" id="IPR055282">
    <property type="entry name" value="PPI1-4"/>
</dbReference>
<dbReference type="PANTHER" id="PTHR32219:SF2">
    <property type="entry name" value="PROTON PUMP-INTERACTOR 1"/>
    <property type="match status" value="1"/>
</dbReference>
<dbReference type="PANTHER" id="PTHR32219">
    <property type="entry name" value="RNA-BINDING PROTEIN YLMH-RELATED"/>
    <property type="match status" value="1"/>
</dbReference>
<sequence>MEATGAEATLSQVTAVDGEDNLFQDKESRATAKERGEAAVFGLENIVTANGATSAADLAPPKDVVDEWPEPKQTHTFFFVRICSYEDPSLKAKLEQADKECQKKIQARSHIFEALRTKRSERSNIISELKPLAAENKQYNEVVSGKLKEIEPLQKSLGKFRSENNAMRAQGAGLCSSIEELDQLIKSLNDRISHESISLDEEKRLVKEIKQLNGTRSKVIENAAKRAKMQDTVVERGTIHDQVKQIGVGIDEVKRDRQAVRDKIKVLEDQIHAVDGEIAALQDDLTAATARKDKAFEALNELRKTRDLNNTSFHQYRTISNSVRDLSARGEVEAVQQLCQNEVEKFMAQWCSSKSFREDYEKRILVSLNSRQLSRDGRMRNPDEKPIVLETQVAPPAEQEPAPLKKPAKQAKEAPAPRADVTPKDEIRAKAPAKAAKAKQPLDIDDIPDVHDDEPPKEKTKPKVDEAKLKEMKRQEEIEKNKLALERKKKQAEKQAMKAAARAEKEAEKKLKEKEKKARKRSATAGGAESEEAAESDAKSDEAEAQEEEPAAPVTIKKNARHRSTVTKTKTPLPKAVLKRKKSQAFWSWGAPMAALAAALVALLGALVYYQYYYLPASTSN</sequence>
<organism>
    <name type="scientific">Oryza sativa subsp. japonica</name>
    <name type="common">Rice</name>
    <dbReference type="NCBI Taxonomy" id="39947"/>
    <lineage>
        <taxon>Eukaryota</taxon>
        <taxon>Viridiplantae</taxon>
        <taxon>Streptophyta</taxon>
        <taxon>Embryophyta</taxon>
        <taxon>Tracheophyta</taxon>
        <taxon>Spermatophyta</taxon>
        <taxon>Magnoliopsida</taxon>
        <taxon>Liliopsida</taxon>
        <taxon>Poales</taxon>
        <taxon>Poaceae</taxon>
        <taxon>BOP clade</taxon>
        <taxon>Oryzoideae</taxon>
        <taxon>Oryzeae</taxon>
        <taxon>Oryzinae</taxon>
        <taxon>Oryza</taxon>
        <taxon>Oryza sativa</taxon>
    </lineage>
</organism>
<comment type="function">
    <text evidence="1">May regulate plasma membrane ATPase activity.</text>
</comment>
<comment type="subunit">
    <text evidence="4">Interacts with BRI1.</text>
</comment>
<comment type="subcellular location">
    <subcellularLocation>
        <location evidence="1">Cell membrane</location>
        <topology evidence="2">Single-pass membrane protein</topology>
    </subcellularLocation>
</comment>
<comment type="induction">
    <text evidence="4">Induced by brassinolide.</text>
</comment>
<comment type="similarity">
    <text evidence="6">Belongs to the plant proton pump-interactor protein family.</text>
</comment>
<keyword id="KW-1003">Cell membrane</keyword>
<keyword id="KW-0175">Coiled coil</keyword>
<keyword id="KW-0472">Membrane</keyword>
<keyword id="KW-1185">Reference proteome</keyword>
<keyword id="KW-0812">Transmembrane</keyword>
<keyword id="KW-1133">Transmembrane helix</keyword>
<feature type="chain" id="PRO_0000439015" description="Proton pump-interactor BIP131">
    <location>
        <begin position="1"/>
        <end position="621"/>
    </location>
</feature>
<feature type="transmembrane region" description="Helical" evidence="2">
    <location>
        <begin position="589"/>
        <end position="609"/>
    </location>
</feature>
<feature type="region of interest" description="Disordered" evidence="3">
    <location>
        <begin position="374"/>
        <end position="572"/>
    </location>
</feature>
<feature type="coiled-coil region" evidence="2">
    <location>
        <begin position="250"/>
        <end position="305"/>
    </location>
</feature>
<feature type="coiled-coil region" evidence="2">
    <location>
        <begin position="466"/>
        <end position="524"/>
    </location>
</feature>
<feature type="compositionally biased region" description="Basic and acidic residues" evidence="3">
    <location>
        <begin position="374"/>
        <end position="387"/>
    </location>
</feature>
<feature type="compositionally biased region" description="Low complexity" evidence="3">
    <location>
        <begin position="430"/>
        <end position="441"/>
    </location>
</feature>
<feature type="compositionally biased region" description="Basic and acidic residues" evidence="3">
    <location>
        <begin position="448"/>
        <end position="516"/>
    </location>
</feature>